<keyword id="KW-0325">Glycoprotein</keyword>
<keyword id="KW-1032">Host cell membrane</keyword>
<keyword id="KW-1043">Host membrane</keyword>
<keyword id="KW-0945">Host-virus interaction</keyword>
<keyword id="KW-0472">Membrane</keyword>
<keyword id="KW-1185">Reference proteome</keyword>
<keyword id="KW-0812">Transmembrane</keyword>
<keyword id="KW-1161">Viral attachment to host cell</keyword>
<keyword id="KW-0946">Virion</keyword>
<keyword id="KW-1160">Virus entry into host cell</keyword>
<dbReference type="EMBL" id="DQ279927">
    <property type="protein sequence ID" value="ABB89235.1"/>
    <property type="molecule type" value="Genomic_DNA"/>
</dbReference>
<dbReference type="RefSeq" id="YP_001129455.1">
    <property type="nucleotide sequence ID" value="NC_009334.1"/>
</dbReference>
<dbReference type="KEGG" id="vg:5176179"/>
<dbReference type="Proteomes" id="UP000007639">
    <property type="component" value="Genome"/>
</dbReference>
<dbReference type="GO" id="GO:0020002">
    <property type="term" value="C:host cell plasma membrane"/>
    <property type="evidence" value="ECO:0007669"/>
    <property type="project" value="UniProtKB-SubCell"/>
</dbReference>
<dbReference type="GO" id="GO:0016020">
    <property type="term" value="C:membrane"/>
    <property type="evidence" value="ECO:0007669"/>
    <property type="project" value="UniProtKB-KW"/>
</dbReference>
<dbReference type="GO" id="GO:0055036">
    <property type="term" value="C:virion membrane"/>
    <property type="evidence" value="ECO:0007669"/>
    <property type="project" value="UniProtKB-SubCell"/>
</dbReference>
<dbReference type="GO" id="GO:0046718">
    <property type="term" value="P:symbiont entry into host cell"/>
    <property type="evidence" value="ECO:0007669"/>
    <property type="project" value="UniProtKB-KW"/>
</dbReference>
<dbReference type="GO" id="GO:0019062">
    <property type="term" value="P:virion attachment to host cell"/>
    <property type="evidence" value="ECO:0007669"/>
    <property type="project" value="UniProtKB-KW"/>
</dbReference>
<dbReference type="InterPro" id="IPR006727">
    <property type="entry name" value="Herpes_BMRF2"/>
</dbReference>
<dbReference type="Pfam" id="PF04633">
    <property type="entry name" value="Herpes_BMRF2"/>
    <property type="match status" value="1"/>
</dbReference>
<gene>
    <name type="ORF">BMRF2</name>
</gene>
<organismHost>
    <name type="scientific">Homo sapiens</name>
    <name type="common">Human</name>
    <dbReference type="NCBI Taxonomy" id="9606"/>
</organismHost>
<accession>Q1HVH3</accession>
<protein>
    <recommendedName>
        <fullName>Protein BMRF2</fullName>
    </recommendedName>
</protein>
<evidence type="ECO:0000250" key="1"/>
<evidence type="ECO:0000255" key="2"/>
<evidence type="ECO:0000305" key="3"/>
<reference key="1">
    <citation type="journal article" date="2006" name="Virology">
        <title>The genome of Epstein-Barr virus type 2 strain AG876.</title>
        <authorList>
            <person name="Dolan A."/>
            <person name="Addison C."/>
            <person name="Gatherer D."/>
            <person name="Davison A.J."/>
            <person name="McGeoch D.J."/>
        </authorList>
    </citation>
    <scope>NUCLEOTIDE SEQUENCE [LARGE SCALE GENOMIC DNA]</scope>
</reference>
<proteinExistence type="inferred from homology"/>
<organism>
    <name type="scientific">Epstein-Barr virus (strain AG876)</name>
    <name type="common">HHV-4</name>
    <name type="synonym">Human herpesvirus 4</name>
    <dbReference type="NCBI Taxonomy" id="82830"/>
    <lineage>
        <taxon>Viruses</taxon>
        <taxon>Duplodnaviria</taxon>
        <taxon>Heunggongvirae</taxon>
        <taxon>Peploviricota</taxon>
        <taxon>Herviviricetes</taxon>
        <taxon>Herpesvirales</taxon>
        <taxon>Orthoherpesviridae</taxon>
        <taxon>Gammaherpesvirinae</taxon>
        <taxon>Lymphocryptovirus</taxon>
        <taxon>Lymphocryptovirus humangamma4</taxon>
        <taxon>Epstein-Barr virus (strain GD1)</taxon>
    </lineage>
</organism>
<sequence>MFSCKQHLSLGACVFCLGLLASTPFIWCFVFANLLSLEIFSPWQTHVYRLGFPTACLMAVLWTLVPAKHAVRAVTPAIMLNIASALIFFSLRVYSTSTWVSAPCLFLANLPLLCLWPRLAIEIVYICPAIHQRFFELGLLLACTIFALSVVSRALEVSAVFMSPFFIFLALGSGSLAGARRNQIYTSGLERRRSIFCARGDHSVASLKETLHKCPWDLLAISALTVLVVCVMIVLHVHAEVFFGLSRYLPLFLCGAMASGGLYLGHSSIIACVMATLCTLSSVVVYFLHETLGPLGKTVLFISIFVYYFSGVAALSAAMRYKLKKFVNGPLVHLRVVYMCCFVFTFCEYLLVTFIKS</sequence>
<name>BMRF2_EBVA8</name>
<feature type="chain" id="PRO_0000408277" description="Protein BMRF2">
    <location>
        <begin position="1"/>
        <end position="357"/>
    </location>
</feature>
<feature type="topological domain" description="Virion surface" evidence="2">
    <location>
        <begin position="1"/>
        <end position="11"/>
    </location>
</feature>
<feature type="transmembrane region" evidence="2">
    <location>
        <begin position="12"/>
        <end position="32"/>
    </location>
</feature>
<feature type="topological domain" description="Intravirion" evidence="2">
    <location>
        <begin position="33"/>
        <end position="46"/>
    </location>
</feature>
<feature type="transmembrane region" evidence="2">
    <location>
        <begin position="47"/>
        <end position="67"/>
    </location>
</feature>
<feature type="topological domain" description="Virion surface" evidence="2">
    <location>
        <begin position="68"/>
        <end position="70"/>
    </location>
</feature>
<feature type="transmembrane region" evidence="2">
    <location>
        <begin position="71"/>
        <end position="91"/>
    </location>
</feature>
<feature type="topological domain" description="Intravirion" evidence="2">
    <location>
        <begin position="92"/>
        <end position="98"/>
    </location>
</feature>
<feature type="transmembrane region" evidence="2">
    <location>
        <begin position="99"/>
        <end position="121"/>
    </location>
</feature>
<feature type="topological domain" description="Virion surface" evidence="2">
    <location>
        <begin position="122"/>
        <end position="133"/>
    </location>
</feature>
<feature type="transmembrane region" evidence="2">
    <location>
        <begin position="134"/>
        <end position="154"/>
    </location>
</feature>
<feature type="topological domain" description="Intravirion" evidence="2">
    <location>
        <begin position="155"/>
        <end position="158"/>
    </location>
</feature>
<feature type="transmembrane region" evidence="2">
    <location>
        <begin position="159"/>
        <end position="179"/>
    </location>
</feature>
<feature type="topological domain" description="Virion surface" evidence="2">
    <location>
        <begin position="180"/>
        <end position="217"/>
    </location>
</feature>
<feature type="transmembrane region" evidence="2">
    <location>
        <begin position="218"/>
        <end position="238"/>
    </location>
</feature>
<feature type="topological domain" description="Intravirion" evidence="2">
    <location>
        <begin position="239"/>
        <end position="240"/>
    </location>
</feature>
<feature type="transmembrane region" evidence="2">
    <location>
        <begin position="241"/>
        <end position="261"/>
    </location>
</feature>
<feature type="topological domain" description="Virion surface" evidence="2">
    <location>
        <begin position="262"/>
        <end position="267"/>
    </location>
</feature>
<feature type="transmembrane region" evidence="2">
    <location>
        <begin position="268"/>
        <end position="288"/>
    </location>
</feature>
<feature type="topological domain" description="Intravirion" evidence="2">
    <location>
        <begin position="289"/>
        <end position="298"/>
    </location>
</feature>
<feature type="transmembrane region" evidence="2">
    <location>
        <begin position="299"/>
        <end position="319"/>
    </location>
</feature>
<feature type="topological domain" description="Virion surface" evidence="2">
    <location>
        <begin position="320"/>
        <end position="335"/>
    </location>
</feature>
<feature type="transmembrane region" evidence="2">
    <location>
        <begin position="336"/>
        <end position="356"/>
    </location>
</feature>
<feature type="topological domain" description="Intravirion" evidence="2">
    <location>
        <position position="357"/>
    </location>
</feature>
<feature type="short sequence motif" description="Integrin binding site" evidence="2">
    <location>
        <begin position="199"/>
        <end position="201"/>
    </location>
</feature>
<comment type="function">
    <text evidence="1">Facilitates virus attachment to oral epithelial cells by binding to host beta1 integrin family. Participates in rearrangement of cellular actin to increase intercellular contacts by binding BDLF2 and thereby promote virus cell-to-cell spreading (By similarity).</text>
</comment>
<comment type="subunit">
    <text evidence="1">Interacts with BDLF2. Interacts with host beta1 integrin family (By similarity).</text>
</comment>
<comment type="subcellular location">
    <subcellularLocation>
        <location>Virion membrane</location>
        <topology>Multi-pass membrane protein</topology>
    </subcellularLocation>
    <subcellularLocation>
        <location>Host cell membrane</location>
    </subcellularLocation>
    <text evidence="1">In EBV-infected polarized oral epithelial cells, is transported to the basolateral membranes and colocalizes with beta1 integrin.</text>
</comment>
<comment type="domain">
    <text evidence="1">The RGD motif presumably is the main binding site to host beta1 integrins.</text>
</comment>
<comment type="PTM">
    <text evidence="1">Extensively glycosylated by O-linked oligosaccharides.</text>
</comment>
<comment type="similarity">
    <text evidence="3">Belongs to the herpesviridae BMRF2 family.</text>
</comment>